<keyword id="KW-1003">Cell membrane</keyword>
<keyword id="KW-0472">Membrane</keyword>
<keyword id="KW-0735">Signal-anchor</keyword>
<keyword id="KW-0804">Transcription</keyword>
<keyword id="KW-0805">Transcription regulation</keyword>
<keyword id="KW-0812">Transmembrane</keyword>
<keyword id="KW-1133">Transmembrane helix</keyword>
<feature type="chain" id="PRO_0000218505" description="Regulatory protein MsrR">
    <location>
        <begin position="1"/>
        <end position="327"/>
    </location>
</feature>
<feature type="topological domain" description="Cytoplasmic" evidence="2">
    <location>
        <begin position="1"/>
        <end position="31"/>
    </location>
</feature>
<feature type="transmembrane region" description="Helical; Signal-anchor for type II membrane protein" evidence="2">
    <location>
        <begin position="32"/>
        <end position="52"/>
    </location>
</feature>
<feature type="topological domain" description="Extracellular" evidence="2">
    <location>
        <begin position="53"/>
        <end position="327"/>
    </location>
</feature>
<feature type="region of interest" description="Disordered" evidence="3">
    <location>
        <begin position="1"/>
        <end position="24"/>
    </location>
</feature>
<feature type="compositionally biased region" description="Basic and acidic residues" evidence="3">
    <location>
        <begin position="1"/>
        <end position="18"/>
    </location>
</feature>
<organism>
    <name type="scientific">Staphylococcus aureus (strain MRSA252)</name>
    <dbReference type="NCBI Taxonomy" id="282458"/>
    <lineage>
        <taxon>Bacteria</taxon>
        <taxon>Bacillati</taxon>
        <taxon>Bacillota</taxon>
        <taxon>Bacilli</taxon>
        <taxon>Bacillales</taxon>
        <taxon>Staphylococcaceae</taxon>
        <taxon>Staphylococcus</taxon>
    </lineage>
</organism>
<comment type="function">
    <text evidence="1">Involved in SarA attenuation. Affects resistance to oxacillin and teicoplanin, as well as the synthesis of virulence factors (By similarity).</text>
</comment>
<comment type="subcellular location">
    <subcellularLocation>
        <location evidence="4">Cell membrane</location>
        <topology evidence="4">Single-pass type II membrane protein</topology>
    </subcellularLocation>
</comment>
<comment type="similarity">
    <text evidence="4">Belongs to the LytR/CpsA/Psr (LCP) family.</text>
</comment>
<name>MSRR_STAAR</name>
<proteinExistence type="inferred from homology"/>
<dbReference type="EMBL" id="BX571856">
    <property type="protein sequence ID" value="CAG40372.1"/>
    <property type="molecule type" value="Genomic_DNA"/>
</dbReference>
<dbReference type="RefSeq" id="WP_000356975.1">
    <property type="nucleotide sequence ID" value="NC_002952.2"/>
</dbReference>
<dbReference type="SMR" id="Q6GH43"/>
<dbReference type="KEGG" id="sar:SAR1374"/>
<dbReference type="HOGENOM" id="CLU_016455_1_0_9"/>
<dbReference type="Proteomes" id="UP000000596">
    <property type="component" value="Chromosome"/>
</dbReference>
<dbReference type="GO" id="GO:0005886">
    <property type="term" value="C:plasma membrane"/>
    <property type="evidence" value="ECO:0007669"/>
    <property type="project" value="UniProtKB-SubCell"/>
</dbReference>
<dbReference type="Gene3D" id="3.40.630.190">
    <property type="entry name" value="LCP protein"/>
    <property type="match status" value="1"/>
</dbReference>
<dbReference type="InterPro" id="IPR050922">
    <property type="entry name" value="LytR/CpsA/Psr_CW_biosynth"/>
</dbReference>
<dbReference type="InterPro" id="IPR004474">
    <property type="entry name" value="LytR_CpsA_psr"/>
</dbReference>
<dbReference type="NCBIfam" id="TIGR00350">
    <property type="entry name" value="lytR_cpsA_psr"/>
    <property type="match status" value="1"/>
</dbReference>
<dbReference type="PANTHER" id="PTHR33392">
    <property type="entry name" value="POLYISOPRENYL-TEICHOIC ACID--PEPTIDOGLYCAN TEICHOIC ACID TRANSFERASE TAGU"/>
    <property type="match status" value="1"/>
</dbReference>
<dbReference type="PANTHER" id="PTHR33392:SF8">
    <property type="entry name" value="REGULATORY PROTEIN MSRR"/>
    <property type="match status" value="1"/>
</dbReference>
<dbReference type="Pfam" id="PF03816">
    <property type="entry name" value="LytR_cpsA_psr"/>
    <property type="match status" value="1"/>
</dbReference>
<accession>Q6GH43</accession>
<sequence>MDKETNDNEYRRQSEHRTSAPKRKKKKKIRKLPIILLIVVILLIALVVYIVHSYNSGVEYAKKHAKDVKVHQFNGPVKNDGKISILVLGADKAQGGQSRTDSIMVVQYDFINKKMKMMSVMRDIYADIPGYGKHKINSAYALGGPELLRKTLDKNLGINPEYYAVVDFTGFEKMIDELMPEGVPINVEKDMSKNIGVSLKKGNHRLNGKELLGYARFRHDPEGDFGRVRRQQQVMQTLKKEMVNFRTVVKLPKVAGILRGYVNTNIPDSGIFQTGLSFGIRGEKDVKSLTVPIKNSYEDVNTNTDGSALQINKNTNKQAIKDFLDED</sequence>
<gene>
    <name type="primary">msrR</name>
    <name type="ordered locus">SAR1374</name>
</gene>
<reference key="1">
    <citation type="journal article" date="2004" name="Proc. Natl. Acad. Sci. U.S.A.">
        <title>Complete genomes of two clinical Staphylococcus aureus strains: evidence for the rapid evolution of virulence and drug resistance.</title>
        <authorList>
            <person name="Holden M.T.G."/>
            <person name="Feil E.J."/>
            <person name="Lindsay J.A."/>
            <person name="Peacock S.J."/>
            <person name="Day N.P.J."/>
            <person name="Enright M.C."/>
            <person name="Foster T.J."/>
            <person name="Moore C.E."/>
            <person name="Hurst L."/>
            <person name="Atkin R."/>
            <person name="Barron A."/>
            <person name="Bason N."/>
            <person name="Bentley S.D."/>
            <person name="Chillingworth C."/>
            <person name="Chillingworth T."/>
            <person name="Churcher C."/>
            <person name="Clark L."/>
            <person name="Corton C."/>
            <person name="Cronin A."/>
            <person name="Doggett J."/>
            <person name="Dowd L."/>
            <person name="Feltwell T."/>
            <person name="Hance Z."/>
            <person name="Harris B."/>
            <person name="Hauser H."/>
            <person name="Holroyd S."/>
            <person name="Jagels K."/>
            <person name="James K.D."/>
            <person name="Lennard N."/>
            <person name="Line A."/>
            <person name="Mayes R."/>
            <person name="Moule S."/>
            <person name="Mungall K."/>
            <person name="Ormond D."/>
            <person name="Quail M.A."/>
            <person name="Rabbinowitsch E."/>
            <person name="Rutherford K.M."/>
            <person name="Sanders M."/>
            <person name="Sharp S."/>
            <person name="Simmonds M."/>
            <person name="Stevens K."/>
            <person name="Whitehead S."/>
            <person name="Barrell B.G."/>
            <person name="Spratt B.G."/>
            <person name="Parkhill J."/>
        </authorList>
    </citation>
    <scope>NUCLEOTIDE SEQUENCE [LARGE SCALE GENOMIC DNA]</scope>
    <source>
        <strain>MRSA252</strain>
    </source>
</reference>
<protein>
    <recommendedName>
        <fullName>Regulatory protein MsrR</fullName>
    </recommendedName>
</protein>
<evidence type="ECO:0000250" key="1"/>
<evidence type="ECO:0000255" key="2"/>
<evidence type="ECO:0000256" key="3">
    <source>
        <dbReference type="SAM" id="MobiDB-lite"/>
    </source>
</evidence>
<evidence type="ECO:0000305" key="4"/>